<sequence length="269" mass="29394">MAASGGQKSEKLDEAQALARSCAGRPDFLPCDGLSICATHSHGKCFKLHWCCHLGWCHCKYVYQPMTSVCQLPSTAVPVAPSGHTHTMNLSISLAERFLRTAPKFQAPPCPESPKFCVISDLFVDDYMVKRINGKMCYVQRPPPPTPNPTHQPQTAAPQPVPQRSKNSHQVGPTVKQGQAKEKISAPKMDHCSSPSSSEDSGINALGLHYMESCDEDSCVDDDDEEEEDDELSTDGNSSPGSFWDQDECTLLSPSKSIVEIIEKIETTV</sequence>
<gene>
    <name evidence="3" type="primary">c3orf70a</name>
    <name type="ORF">si:dkey-22o12.2</name>
</gene>
<comment type="function">
    <text evidence="2">Plays a role in neuronal and neurobehavioral development (PubMed:31623237). Required for normal expression of neuronal markers elavl3 and eno2 and neurobehaviors related to circadian rhythm and changes in light-dark conditions (PubMed:31623237).</text>
</comment>
<comment type="developmental stage">
    <text evidence="2">Highly expressed in the gut, myotomes and brain, especially the midbrain and hindbrain, at 3 days post-fertilization (dpf).</text>
</comment>
<comment type="disruption phenotype">
    <text evidence="2">Double knockout of c3orf70a and c3orf70b resulted in significantly decreased expression of the mature neuron markers elavl3 and eno2 and the midbrain/hindbrain marker irx3b. Neurobehaviors related to circadian rhythm and altered light-dark conditions were significantly impaired.</text>
</comment>
<comment type="similarity">
    <text evidence="4">Belongs to the UPF0524 family.</text>
</comment>
<name>CC70A_DANRE</name>
<evidence type="ECO:0000256" key="1">
    <source>
        <dbReference type="SAM" id="MobiDB-lite"/>
    </source>
</evidence>
<evidence type="ECO:0000269" key="2">
    <source>
    </source>
</evidence>
<evidence type="ECO:0000303" key="3">
    <source>
    </source>
</evidence>
<evidence type="ECO:0000305" key="4"/>
<dbReference type="EMBL" id="BX088533">
    <property type="protein sequence ID" value="CAK10811.1"/>
    <property type="molecule type" value="Genomic_DNA"/>
</dbReference>
<dbReference type="RefSeq" id="NP_001119939.1">
    <property type="nucleotide sequence ID" value="NM_001126467.1"/>
</dbReference>
<dbReference type="FunCoup" id="Q1LY84">
    <property type="interactions" value="1056"/>
</dbReference>
<dbReference type="STRING" id="7955.ENSDARP00000105219"/>
<dbReference type="PaxDb" id="7955-ENSDARP00000105219"/>
<dbReference type="Ensembl" id="ENSDART00000125759">
    <property type="protein sequence ID" value="ENSDARP00000105219"/>
    <property type="gene ID" value="ENSDARG00000091513"/>
</dbReference>
<dbReference type="GeneID" id="100000151"/>
<dbReference type="KEGG" id="dre:100000151"/>
<dbReference type="AGR" id="ZFIN:ZDB-GENE-060503-443"/>
<dbReference type="ZFIN" id="ZDB-GENE-060503-443">
    <property type="gene designation" value="si:dkey-22o12.2"/>
</dbReference>
<dbReference type="eggNOG" id="ENOG502QQSJ">
    <property type="taxonomic scope" value="Eukaryota"/>
</dbReference>
<dbReference type="HOGENOM" id="CLU_081879_0_0_1"/>
<dbReference type="InParanoid" id="Q1LY84"/>
<dbReference type="OMA" id="WEQDECT"/>
<dbReference type="OrthoDB" id="8924346at2759"/>
<dbReference type="PhylomeDB" id="Q1LY84"/>
<dbReference type="TreeFam" id="TF328625"/>
<dbReference type="PRO" id="PR:Q1LY84"/>
<dbReference type="Proteomes" id="UP000000437">
    <property type="component" value="Alternate scaffold 1"/>
</dbReference>
<dbReference type="Proteomes" id="UP000000437">
    <property type="component" value="Chromosome 1"/>
</dbReference>
<dbReference type="Bgee" id="ENSDARG00000091513">
    <property type="expression patterns" value="Expressed in swim bladder and 19 other cell types or tissues"/>
</dbReference>
<dbReference type="GO" id="GO:0048512">
    <property type="term" value="P:circadian behavior"/>
    <property type="evidence" value="ECO:0000315"/>
    <property type="project" value="UniProtKB"/>
</dbReference>
<dbReference type="GO" id="GO:0007399">
    <property type="term" value="P:nervous system development"/>
    <property type="evidence" value="ECO:0000315"/>
    <property type="project" value="UniProtKB"/>
</dbReference>
<dbReference type="InterPro" id="IPR029670">
    <property type="entry name" value="UPF0524_fam"/>
</dbReference>
<dbReference type="PANTHER" id="PTHR31785">
    <property type="entry name" value="UPF0524 PROTEIN C3ORF70"/>
    <property type="match status" value="1"/>
</dbReference>
<dbReference type="PANTHER" id="PTHR31785:SF2">
    <property type="entry name" value="UPF0524 PROTEIN C3ORF70"/>
    <property type="match status" value="1"/>
</dbReference>
<dbReference type="Pfam" id="PF15823">
    <property type="entry name" value="UPF0524"/>
    <property type="match status" value="1"/>
</dbReference>
<reference key="1">
    <citation type="journal article" date="2013" name="Nature">
        <title>The zebrafish reference genome sequence and its relationship to the human genome.</title>
        <authorList>
            <person name="Howe K."/>
            <person name="Clark M.D."/>
            <person name="Torroja C.F."/>
            <person name="Torrance J."/>
            <person name="Berthelot C."/>
            <person name="Muffato M."/>
            <person name="Collins J.E."/>
            <person name="Humphray S."/>
            <person name="McLaren K."/>
            <person name="Matthews L."/>
            <person name="McLaren S."/>
            <person name="Sealy I."/>
            <person name="Caccamo M."/>
            <person name="Churcher C."/>
            <person name="Scott C."/>
            <person name="Barrett J.C."/>
            <person name="Koch R."/>
            <person name="Rauch G.J."/>
            <person name="White S."/>
            <person name="Chow W."/>
            <person name="Kilian B."/>
            <person name="Quintais L.T."/>
            <person name="Guerra-Assuncao J.A."/>
            <person name="Zhou Y."/>
            <person name="Gu Y."/>
            <person name="Yen J."/>
            <person name="Vogel J.H."/>
            <person name="Eyre T."/>
            <person name="Redmond S."/>
            <person name="Banerjee R."/>
            <person name="Chi J."/>
            <person name="Fu B."/>
            <person name="Langley E."/>
            <person name="Maguire S.F."/>
            <person name="Laird G.K."/>
            <person name="Lloyd D."/>
            <person name="Kenyon E."/>
            <person name="Donaldson S."/>
            <person name="Sehra H."/>
            <person name="Almeida-King J."/>
            <person name="Loveland J."/>
            <person name="Trevanion S."/>
            <person name="Jones M."/>
            <person name="Quail M."/>
            <person name="Willey D."/>
            <person name="Hunt A."/>
            <person name="Burton J."/>
            <person name="Sims S."/>
            <person name="McLay K."/>
            <person name="Plumb B."/>
            <person name="Davis J."/>
            <person name="Clee C."/>
            <person name="Oliver K."/>
            <person name="Clark R."/>
            <person name="Riddle C."/>
            <person name="Elliot D."/>
            <person name="Threadgold G."/>
            <person name="Harden G."/>
            <person name="Ware D."/>
            <person name="Begum S."/>
            <person name="Mortimore B."/>
            <person name="Kerry G."/>
            <person name="Heath P."/>
            <person name="Phillimore B."/>
            <person name="Tracey A."/>
            <person name="Corby N."/>
            <person name="Dunn M."/>
            <person name="Johnson C."/>
            <person name="Wood J."/>
            <person name="Clark S."/>
            <person name="Pelan S."/>
            <person name="Griffiths G."/>
            <person name="Smith M."/>
            <person name="Glithero R."/>
            <person name="Howden P."/>
            <person name="Barker N."/>
            <person name="Lloyd C."/>
            <person name="Stevens C."/>
            <person name="Harley J."/>
            <person name="Holt K."/>
            <person name="Panagiotidis G."/>
            <person name="Lovell J."/>
            <person name="Beasley H."/>
            <person name="Henderson C."/>
            <person name="Gordon D."/>
            <person name="Auger K."/>
            <person name="Wright D."/>
            <person name="Collins J."/>
            <person name="Raisen C."/>
            <person name="Dyer L."/>
            <person name="Leung K."/>
            <person name="Robertson L."/>
            <person name="Ambridge K."/>
            <person name="Leongamornlert D."/>
            <person name="McGuire S."/>
            <person name="Gilderthorp R."/>
            <person name="Griffiths C."/>
            <person name="Manthravadi D."/>
            <person name="Nichol S."/>
            <person name="Barker G."/>
            <person name="Whitehead S."/>
            <person name="Kay M."/>
            <person name="Brown J."/>
            <person name="Murnane C."/>
            <person name="Gray E."/>
            <person name="Humphries M."/>
            <person name="Sycamore N."/>
            <person name="Barker D."/>
            <person name="Saunders D."/>
            <person name="Wallis J."/>
            <person name="Babbage A."/>
            <person name="Hammond S."/>
            <person name="Mashreghi-Mohammadi M."/>
            <person name="Barr L."/>
            <person name="Martin S."/>
            <person name="Wray P."/>
            <person name="Ellington A."/>
            <person name="Matthews N."/>
            <person name="Ellwood M."/>
            <person name="Woodmansey R."/>
            <person name="Clark G."/>
            <person name="Cooper J."/>
            <person name="Tromans A."/>
            <person name="Grafham D."/>
            <person name="Skuce C."/>
            <person name="Pandian R."/>
            <person name="Andrews R."/>
            <person name="Harrison E."/>
            <person name="Kimberley A."/>
            <person name="Garnett J."/>
            <person name="Fosker N."/>
            <person name="Hall R."/>
            <person name="Garner P."/>
            <person name="Kelly D."/>
            <person name="Bird C."/>
            <person name="Palmer S."/>
            <person name="Gehring I."/>
            <person name="Berger A."/>
            <person name="Dooley C.M."/>
            <person name="Ersan-Urun Z."/>
            <person name="Eser C."/>
            <person name="Geiger H."/>
            <person name="Geisler M."/>
            <person name="Karotki L."/>
            <person name="Kirn A."/>
            <person name="Konantz J."/>
            <person name="Konantz M."/>
            <person name="Oberlander M."/>
            <person name="Rudolph-Geiger S."/>
            <person name="Teucke M."/>
            <person name="Lanz C."/>
            <person name="Raddatz G."/>
            <person name="Osoegawa K."/>
            <person name="Zhu B."/>
            <person name="Rapp A."/>
            <person name="Widaa S."/>
            <person name="Langford C."/>
            <person name="Yang F."/>
            <person name="Schuster S.C."/>
            <person name="Carter N.P."/>
            <person name="Harrow J."/>
            <person name="Ning Z."/>
            <person name="Herrero J."/>
            <person name="Searle S.M."/>
            <person name="Enright A."/>
            <person name="Geisler R."/>
            <person name="Plasterk R.H."/>
            <person name="Lee C."/>
            <person name="Westerfield M."/>
            <person name="de Jong P.J."/>
            <person name="Zon L.I."/>
            <person name="Postlethwait J.H."/>
            <person name="Nusslein-Volhard C."/>
            <person name="Hubbard T.J."/>
            <person name="Roest Crollius H."/>
            <person name="Rogers J."/>
            <person name="Stemple D.L."/>
        </authorList>
    </citation>
    <scope>NUCLEOTIDE SEQUENCE [LARGE SCALE GENOMIC DNA]</scope>
    <source>
        <strain>Tuebingen</strain>
    </source>
</reference>
<reference key="2">
    <citation type="journal article" date="2019" name="Pharmaceuticals (Basel)">
        <title>C3orf70 Is Involved in Neural and Neurobehavioral Development.</title>
        <authorList>
            <person name="Ashikawa Y."/>
            <person name="Shiromizu T."/>
            <person name="Miura K."/>
            <person name="Adachi Y."/>
            <person name="Matsui T."/>
            <person name="Bessho Y."/>
            <person name="Tanaka T."/>
            <person name="Nishimura Y."/>
        </authorList>
    </citation>
    <scope>FUNCTION</scope>
    <scope>DISRUPTION PHENOTYPE</scope>
    <scope>DEVELOPMENTAL STAGE</scope>
</reference>
<proteinExistence type="evidence at transcript level"/>
<organism>
    <name type="scientific">Danio rerio</name>
    <name type="common">Zebrafish</name>
    <name type="synonym">Brachydanio rerio</name>
    <dbReference type="NCBI Taxonomy" id="7955"/>
    <lineage>
        <taxon>Eukaryota</taxon>
        <taxon>Metazoa</taxon>
        <taxon>Chordata</taxon>
        <taxon>Craniata</taxon>
        <taxon>Vertebrata</taxon>
        <taxon>Euteleostomi</taxon>
        <taxon>Actinopterygii</taxon>
        <taxon>Neopterygii</taxon>
        <taxon>Teleostei</taxon>
        <taxon>Ostariophysi</taxon>
        <taxon>Cypriniformes</taxon>
        <taxon>Danionidae</taxon>
        <taxon>Danioninae</taxon>
        <taxon>Danio</taxon>
    </lineage>
</organism>
<keyword id="KW-0524">Neurogenesis</keyword>
<keyword id="KW-1185">Reference proteome</keyword>
<protein>
    <recommendedName>
        <fullName>UPF0524 protein C3orf70 homolog A</fullName>
    </recommendedName>
</protein>
<feature type="chain" id="PRO_0000319978" description="UPF0524 protein C3orf70 homolog A">
    <location>
        <begin position="1"/>
        <end position="269"/>
    </location>
</feature>
<feature type="region of interest" description="Disordered" evidence="1">
    <location>
        <begin position="139"/>
        <end position="203"/>
    </location>
</feature>
<feature type="region of interest" description="Disordered" evidence="1">
    <location>
        <begin position="215"/>
        <end position="249"/>
    </location>
</feature>
<feature type="compositionally biased region" description="Pro residues" evidence="1">
    <location>
        <begin position="141"/>
        <end position="150"/>
    </location>
</feature>
<feature type="compositionally biased region" description="Low complexity" evidence="1">
    <location>
        <begin position="151"/>
        <end position="164"/>
    </location>
</feature>
<feature type="compositionally biased region" description="Basic and acidic residues" evidence="1">
    <location>
        <begin position="179"/>
        <end position="191"/>
    </location>
</feature>
<feature type="compositionally biased region" description="Acidic residues" evidence="1">
    <location>
        <begin position="215"/>
        <end position="233"/>
    </location>
</feature>
<accession>Q1LY84</accession>